<sequence>MKIKDTLNMGKTSFPMRAGLPKNESIWQKKWDEDHVYEQRQKLNEGKPTFMLHDGPPFANGNIHMGHALNKISKDIIVRYKSMNGFRAPYVPGWDTHGLPIEQQLAKQGVKRKEMSMTDYRELCRQFAMQEIDKQRTDFKRLGVMGDWEHPYITLQHHYEASEIRVFGAMAKKGYIYHGLKPVYWSWSSESTLAEAEIEYHDDKSPSIYVAFKVVDGKGLLDTDTYLVIWTTTPWTIPANYGITVNPRFDYVQVQVGDKKYVVAAELLDRVAEEIGWENPKILKTFKGTDMDKMTAQHPLYDRTSLVMNADHVTLDAGTGLVHTAPGHGEDDYKVGVKYGLPVVSVVDAKGYMNEYAPGFEGVFYDDANKQITQALADKGALLKLDFFTHSYPHDWRTKKPVIFRATTQWFASIDAFRDQILKAIDTVDFKPSWGKTRLYNMIRDRGDWVISRQRAWGVPLPIFYAEDGEPIIEEETINHVADLFGKYGSNVWFEREAKDLLPEGYTNPHSPNGQFTKEKDIMDVWFDSGSSHQAVLAARPELSFPADLYLEGSDQYRGWFNSSLITSVAATGVAPYRGILSQGFTLDGKGRKMSKSLGNTIVPATIEKQFGAEIIRLWVATVDSSSDVRVSVDNFAQTSEAYRKIRNTMRFMVANTGDFDPEKDTVAYDELGSVDRYMMVRLNQIIKQVKTAYDAYDFATVEKTISSFLVNDLSAFYLDVAKDVVYIEAKDDPKRRGMQTVMFAALLALTKLITPILPHTAEEVWPYLKQPEAYAALADMPEAEQFDDESQLLDIWSGFMDFRSEVQKALELARDNKVIGKSLEAAVTVYPSEPVRDMLDDVDANVMQLLITSHFEIAPATTQAPANAEQFDDMAVVVKHADGEVCPRCRMVRTDIGTDPKLPQLCSRCAAIVEANFPDAVTNGFDK</sequence>
<gene>
    <name evidence="1" type="primary">ileS</name>
    <name type="ordered locus">LSEI_1280</name>
</gene>
<keyword id="KW-0030">Aminoacyl-tRNA synthetase</keyword>
<keyword id="KW-0067">ATP-binding</keyword>
<keyword id="KW-0963">Cytoplasm</keyword>
<keyword id="KW-0436">Ligase</keyword>
<keyword id="KW-0479">Metal-binding</keyword>
<keyword id="KW-0547">Nucleotide-binding</keyword>
<keyword id="KW-0648">Protein biosynthesis</keyword>
<keyword id="KW-1185">Reference proteome</keyword>
<keyword id="KW-0862">Zinc</keyword>
<feature type="chain" id="PRO_1000022082" description="Isoleucine--tRNA ligase">
    <location>
        <begin position="1"/>
        <end position="928"/>
    </location>
</feature>
<feature type="short sequence motif" description="'HIGH' region">
    <location>
        <begin position="57"/>
        <end position="67"/>
    </location>
</feature>
<feature type="short sequence motif" description="'KMSKS' region">
    <location>
        <begin position="593"/>
        <end position="597"/>
    </location>
</feature>
<feature type="binding site" evidence="1">
    <location>
        <position position="552"/>
    </location>
    <ligand>
        <name>L-isoleucyl-5'-AMP</name>
        <dbReference type="ChEBI" id="CHEBI:178002"/>
    </ligand>
</feature>
<feature type="binding site" evidence="1">
    <location>
        <position position="596"/>
    </location>
    <ligand>
        <name>ATP</name>
        <dbReference type="ChEBI" id="CHEBI:30616"/>
    </ligand>
</feature>
<feature type="binding site" evidence="1">
    <location>
        <position position="887"/>
    </location>
    <ligand>
        <name>Zn(2+)</name>
        <dbReference type="ChEBI" id="CHEBI:29105"/>
    </ligand>
</feature>
<feature type="binding site" evidence="1">
    <location>
        <position position="890"/>
    </location>
    <ligand>
        <name>Zn(2+)</name>
        <dbReference type="ChEBI" id="CHEBI:29105"/>
    </ligand>
</feature>
<feature type="binding site" evidence="1">
    <location>
        <position position="907"/>
    </location>
    <ligand>
        <name>Zn(2+)</name>
        <dbReference type="ChEBI" id="CHEBI:29105"/>
    </ligand>
</feature>
<feature type="binding site" evidence="1">
    <location>
        <position position="910"/>
    </location>
    <ligand>
        <name>Zn(2+)</name>
        <dbReference type="ChEBI" id="CHEBI:29105"/>
    </ligand>
</feature>
<dbReference type="EC" id="6.1.1.5" evidence="1"/>
<dbReference type="EMBL" id="CP000423">
    <property type="protein sequence ID" value="ABJ70063.1"/>
    <property type="molecule type" value="Genomic_DNA"/>
</dbReference>
<dbReference type="RefSeq" id="WP_011674453.1">
    <property type="nucleotide sequence ID" value="NC_008526.1"/>
</dbReference>
<dbReference type="RefSeq" id="YP_806505.1">
    <property type="nucleotide sequence ID" value="NC_008526.1"/>
</dbReference>
<dbReference type="SMR" id="Q039Q9"/>
<dbReference type="STRING" id="321967.LSEI_1280"/>
<dbReference type="PaxDb" id="321967-LSEI_1280"/>
<dbReference type="KEGG" id="lca:LSEI_1280"/>
<dbReference type="PATRIC" id="fig|321967.11.peg.1258"/>
<dbReference type="HOGENOM" id="CLU_001493_7_1_9"/>
<dbReference type="Proteomes" id="UP000001651">
    <property type="component" value="Chromosome"/>
</dbReference>
<dbReference type="GO" id="GO:0005829">
    <property type="term" value="C:cytosol"/>
    <property type="evidence" value="ECO:0007669"/>
    <property type="project" value="TreeGrafter"/>
</dbReference>
<dbReference type="GO" id="GO:0002161">
    <property type="term" value="F:aminoacyl-tRNA deacylase activity"/>
    <property type="evidence" value="ECO:0007669"/>
    <property type="project" value="InterPro"/>
</dbReference>
<dbReference type="GO" id="GO:0005524">
    <property type="term" value="F:ATP binding"/>
    <property type="evidence" value="ECO:0007669"/>
    <property type="project" value="UniProtKB-UniRule"/>
</dbReference>
<dbReference type="GO" id="GO:0004822">
    <property type="term" value="F:isoleucine-tRNA ligase activity"/>
    <property type="evidence" value="ECO:0007669"/>
    <property type="project" value="UniProtKB-UniRule"/>
</dbReference>
<dbReference type="GO" id="GO:0000049">
    <property type="term" value="F:tRNA binding"/>
    <property type="evidence" value="ECO:0007669"/>
    <property type="project" value="InterPro"/>
</dbReference>
<dbReference type="GO" id="GO:0008270">
    <property type="term" value="F:zinc ion binding"/>
    <property type="evidence" value="ECO:0007669"/>
    <property type="project" value="UniProtKB-UniRule"/>
</dbReference>
<dbReference type="GO" id="GO:0006428">
    <property type="term" value="P:isoleucyl-tRNA aminoacylation"/>
    <property type="evidence" value="ECO:0007669"/>
    <property type="project" value="UniProtKB-UniRule"/>
</dbReference>
<dbReference type="CDD" id="cd07960">
    <property type="entry name" value="Anticodon_Ia_Ile_BEm"/>
    <property type="match status" value="1"/>
</dbReference>
<dbReference type="CDD" id="cd00818">
    <property type="entry name" value="IleRS_core"/>
    <property type="match status" value="1"/>
</dbReference>
<dbReference type="FunFam" id="1.10.10.830:FF:000001">
    <property type="entry name" value="Isoleucine--tRNA ligase"/>
    <property type="match status" value="1"/>
</dbReference>
<dbReference type="FunFam" id="1.10.730.20:FF:000001">
    <property type="entry name" value="Isoleucine--tRNA ligase"/>
    <property type="match status" value="1"/>
</dbReference>
<dbReference type="FunFam" id="3.40.50.620:FF:000152">
    <property type="entry name" value="Isoleucine--tRNA ligase"/>
    <property type="match status" value="1"/>
</dbReference>
<dbReference type="FunFam" id="3.90.740.10:FF:000006">
    <property type="entry name" value="Isoleucine--tRNA ligase"/>
    <property type="match status" value="1"/>
</dbReference>
<dbReference type="Gene3D" id="1.10.730.20">
    <property type="match status" value="1"/>
</dbReference>
<dbReference type="Gene3D" id="3.40.50.620">
    <property type="entry name" value="HUPs"/>
    <property type="match status" value="2"/>
</dbReference>
<dbReference type="Gene3D" id="1.10.10.830">
    <property type="entry name" value="Ile-tRNA synthetase CP2 domain-like"/>
    <property type="match status" value="1"/>
</dbReference>
<dbReference type="HAMAP" id="MF_02002">
    <property type="entry name" value="Ile_tRNA_synth_type1"/>
    <property type="match status" value="1"/>
</dbReference>
<dbReference type="InterPro" id="IPR001412">
    <property type="entry name" value="aa-tRNA-synth_I_CS"/>
</dbReference>
<dbReference type="InterPro" id="IPR002300">
    <property type="entry name" value="aa-tRNA-synth_Ia"/>
</dbReference>
<dbReference type="InterPro" id="IPR033708">
    <property type="entry name" value="Anticodon_Ile_BEm"/>
</dbReference>
<dbReference type="InterPro" id="IPR002301">
    <property type="entry name" value="Ile-tRNA-ligase"/>
</dbReference>
<dbReference type="InterPro" id="IPR023585">
    <property type="entry name" value="Ile-tRNA-ligase_type1"/>
</dbReference>
<dbReference type="InterPro" id="IPR050081">
    <property type="entry name" value="Ile-tRNA_ligase"/>
</dbReference>
<dbReference type="InterPro" id="IPR013155">
    <property type="entry name" value="M/V/L/I-tRNA-synth_anticd-bd"/>
</dbReference>
<dbReference type="InterPro" id="IPR014729">
    <property type="entry name" value="Rossmann-like_a/b/a_fold"/>
</dbReference>
<dbReference type="InterPro" id="IPR009080">
    <property type="entry name" value="tRNAsynth_Ia_anticodon-bd"/>
</dbReference>
<dbReference type="InterPro" id="IPR009008">
    <property type="entry name" value="Val/Leu/Ile-tRNA-synth_edit"/>
</dbReference>
<dbReference type="InterPro" id="IPR010663">
    <property type="entry name" value="Znf_FPG/IleRS"/>
</dbReference>
<dbReference type="NCBIfam" id="TIGR00392">
    <property type="entry name" value="ileS"/>
    <property type="match status" value="1"/>
</dbReference>
<dbReference type="PANTHER" id="PTHR42765:SF1">
    <property type="entry name" value="ISOLEUCINE--TRNA LIGASE, MITOCHONDRIAL"/>
    <property type="match status" value="1"/>
</dbReference>
<dbReference type="PANTHER" id="PTHR42765">
    <property type="entry name" value="SOLEUCYL-TRNA SYNTHETASE"/>
    <property type="match status" value="1"/>
</dbReference>
<dbReference type="Pfam" id="PF08264">
    <property type="entry name" value="Anticodon_1"/>
    <property type="match status" value="1"/>
</dbReference>
<dbReference type="Pfam" id="PF00133">
    <property type="entry name" value="tRNA-synt_1"/>
    <property type="match status" value="1"/>
</dbReference>
<dbReference type="Pfam" id="PF06827">
    <property type="entry name" value="zf-FPG_IleRS"/>
    <property type="match status" value="1"/>
</dbReference>
<dbReference type="PRINTS" id="PR00984">
    <property type="entry name" value="TRNASYNTHILE"/>
</dbReference>
<dbReference type="SUPFAM" id="SSF47323">
    <property type="entry name" value="Anticodon-binding domain of a subclass of class I aminoacyl-tRNA synthetases"/>
    <property type="match status" value="1"/>
</dbReference>
<dbReference type="SUPFAM" id="SSF52374">
    <property type="entry name" value="Nucleotidylyl transferase"/>
    <property type="match status" value="1"/>
</dbReference>
<dbReference type="SUPFAM" id="SSF50677">
    <property type="entry name" value="ValRS/IleRS/LeuRS editing domain"/>
    <property type="match status" value="1"/>
</dbReference>
<dbReference type="PROSITE" id="PS00178">
    <property type="entry name" value="AA_TRNA_LIGASE_I"/>
    <property type="match status" value="1"/>
</dbReference>
<name>SYI_LACP3</name>
<organism>
    <name type="scientific">Lacticaseibacillus paracasei (strain ATCC 334 / BCRC 17002 / CCUG 31169 / CIP 107868 / KCTC 3260 / NRRL B-441)</name>
    <name type="common">Lactobacillus paracasei</name>
    <dbReference type="NCBI Taxonomy" id="321967"/>
    <lineage>
        <taxon>Bacteria</taxon>
        <taxon>Bacillati</taxon>
        <taxon>Bacillota</taxon>
        <taxon>Bacilli</taxon>
        <taxon>Lactobacillales</taxon>
        <taxon>Lactobacillaceae</taxon>
        <taxon>Lacticaseibacillus</taxon>
    </lineage>
</organism>
<accession>Q039Q9</accession>
<evidence type="ECO:0000255" key="1">
    <source>
        <dbReference type="HAMAP-Rule" id="MF_02002"/>
    </source>
</evidence>
<protein>
    <recommendedName>
        <fullName evidence="1">Isoleucine--tRNA ligase</fullName>
        <ecNumber evidence="1">6.1.1.5</ecNumber>
    </recommendedName>
    <alternativeName>
        <fullName evidence="1">Isoleucyl-tRNA synthetase</fullName>
        <shortName evidence="1">IleRS</shortName>
    </alternativeName>
</protein>
<proteinExistence type="inferred from homology"/>
<reference key="1">
    <citation type="journal article" date="2006" name="Proc. Natl. Acad. Sci. U.S.A.">
        <title>Comparative genomics of the lactic acid bacteria.</title>
        <authorList>
            <person name="Makarova K.S."/>
            <person name="Slesarev A."/>
            <person name="Wolf Y.I."/>
            <person name="Sorokin A."/>
            <person name="Mirkin B."/>
            <person name="Koonin E.V."/>
            <person name="Pavlov A."/>
            <person name="Pavlova N."/>
            <person name="Karamychev V."/>
            <person name="Polouchine N."/>
            <person name="Shakhova V."/>
            <person name="Grigoriev I."/>
            <person name="Lou Y."/>
            <person name="Rohksar D."/>
            <person name="Lucas S."/>
            <person name="Huang K."/>
            <person name="Goodstein D.M."/>
            <person name="Hawkins T."/>
            <person name="Plengvidhya V."/>
            <person name="Welker D."/>
            <person name="Hughes J."/>
            <person name="Goh Y."/>
            <person name="Benson A."/>
            <person name="Baldwin K."/>
            <person name="Lee J.-H."/>
            <person name="Diaz-Muniz I."/>
            <person name="Dosti B."/>
            <person name="Smeianov V."/>
            <person name="Wechter W."/>
            <person name="Barabote R."/>
            <person name="Lorca G."/>
            <person name="Altermann E."/>
            <person name="Barrangou R."/>
            <person name="Ganesan B."/>
            <person name="Xie Y."/>
            <person name="Rawsthorne H."/>
            <person name="Tamir D."/>
            <person name="Parker C."/>
            <person name="Breidt F."/>
            <person name="Broadbent J.R."/>
            <person name="Hutkins R."/>
            <person name="O'Sullivan D."/>
            <person name="Steele J."/>
            <person name="Unlu G."/>
            <person name="Saier M.H. Jr."/>
            <person name="Klaenhammer T."/>
            <person name="Richardson P."/>
            <person name="Kozyavkin S."/>
            <person name="Weimer B.C."/>
            <person name="Mills D.A."/>
        </authorList>
    </citation>
    <scope>NUCLEOTIDE SEQUENCE [LARGE SCALE GENOMIC DNA]</scope>
    <source>
        <strain>ATCC 334 / BCRC 17002 / CCUG 31169 / CIP 107868 / KCTC 3260 / NRRL B-441</strain>
    </source>
</reference>
<comment type="function">
    <text evidence="1">Catalyzes the attachment of isoleucine to tRNA(Ile). As IleRS can inadvertently accommodate and process structurally similar amino acids such as valine, to avoid such errors it has two additional distinct tRNA(Ile)-dependent editing activities. One activity is designated as 'pretransfer' editing and involves the hydrolysis of activated Val-AMP. The other activity is designated 'posttransfer' editing and involves deacylation of mischarged Val-tRNA(Ile).</text>
</comment>
<comment type="catalytic activity">
    <reaction evidence="1">
        <text>tRNA(Ile) + L-isoleucine + ATP = L-isoleucyl-tRNA(Ile) + AMP + diphosphate</text>
        <dbReference type="Rhea" id="RHEA:11060"/>
        <dbReference type="Rhea" id="RHEA-COMP:9666"/>
        <dbReference type="Rhea" id="RHEA-COMP:9695"/>
        <dbReference type="ChEBI" id="CHEBI:30616"/>
        <dbReference type="ChEBI" id="CHEBI:33019"/>
        <dbReference type="ChEBI" id="CHEBI:58045"/>
        <dbReference type="ChEBI" id="CHEBI:78442"/>
        <dbReference type="ChEBI" id="CHEBI:78528"/>
        <dbReference type="ChEBI" id="CHEBI:456215"/>
        <dbReference type="EC" id="6.1.1.5"/>
    </reaction>
</comment>
<comment type="cofactor">
    <cofactor evidence="1">
        <name>Zn(2+)</name>
        <dbReference type="ChEBI" id="CHEBI:29105"/>
    </cofactor>
    <text evidence="1">Binds 1 zinc ion per subunit.</text>
</comment>
<comment type="subunit">
    <text evidence="1">Monomer.</text>
</comment>
<comment type="subcellular location">
    <subcellularLocation>
        <location evidence="1">Cytoplasm</location>
    </subcellularLocation>
</comment>
<comment type="domain">
    <text evidence="1">IleRS has two distinct active sites: one for aminoacylation and one for editing. The misactivated valine is translocated from the active site to the editing site, which sterically excludes the correctly activated isoleucine. The single editing site contains two valyl binding pockets, one specific for each substrate (Val-AMP or Val-tRNA(Ile)).</text>
</comment>
<comment type="similarity">
    <text evidence="1">Belongs to the class-I aminoacyl-tRNA synthetase family. IleS type 1 subfamily.</text>
</comment>